<proteinExistence type="evidence at protein level"/>
<keyword id="KW-0002">3D-structure</keyword>
<keyword id="KW-1015">Disulfide bond</keyword>
<keyword id="KW-0281">Fimbrium</keyword>
<keyword id="KW-0472">Membrane</keyword>
<keyword id="KW-0488">Methylation</keyword>
<keyword id="KW-0812">Transmembrane</keyword>
<keyword id="KW-1133">Transmembrane helix</keyword>
<feature type="propeptide" id="PRO_0000024172" description="Leader sequence" evidence="3">
    <location>
        <begin position="1"/>
        <end position="6"/>
    </location>
</feature>
<feature type="chain" id="PRO_0000024173" description="Fimbrial protein">
    <location>
        <begin position="7"/>
        <end position="154"/>
    </location>
</feature>
<feature type="transmembrane region" description="Helical" evidence="2">
    <location>
        <begin position="7"/>
        <end position="27"/>
    </location>
</feature>
<feature type="modified residue" description="N-methylphenylalanine" evidence="3">
    <location>
        <position position="7"/>
    </location>
</feature>
<feature type="disulfide bond" evidence="1">
    <location>
        <begin position="133"/>
        <end position="151"/>
    </location>
</feature>
<feature type="helix" evidence="5">
    <location>
        <begin position="35"/>
        <end position="47"/>
    </location>
</feature>
<feature type="helix" evidence="5">
    <location>
        <begin position="50"/>
        <end position="59"/>
    </location>
</feature>
<feature type="strand" evidence="5">
    <location>
        <begin position="84"/>
        <end position="87"/>
    </location>
</feature>
<feature type="helix" evidence="5">
    <location>
        <begin position="88"/>
        <end position="91"/>
    </location>
</feature>
<feature type="strand" evidence="5">
    <location>
        <begin position="92"/>
        <end position="96"/>
    </location>
</feature>
<feature type="strand" evidence="5">
    <location>
        <begin position="98"/>
        <end position="100"/>
    </location>
</feature>
<feature type="strand" evidence="5">
    <location>
        <begin position="102"/>
        <end position="108"/>
    </location>
</feature>
<feature type="turn" evidence="5">
    <location>
        <begin position="114"/>
        <end position="118"/>
    </location>
</feature>
<feature type="strand" evidence="5">
    <location>
        <begin position="120"/>
        <end position="125"/>
    </location>
</feature>
<feature type="strand" evidence="5">
    <location>
        <begin position="131"/>
        <end position="137"/>
    </location>
</feature>
<feature type="helix" evidence="5">
    <location>
        <begin position="144"/>
        <end position="146"/>
    </location>
</feature>
<accession>P17836</accession>
<gene>
    <name type="primary">pilA</name>
    <name type="synonym">fimA</name>
</gene>
<sequence>MKAQKGFTLIELMIVVAIIGILAAIAIPQYQDYTARTQVTRAVSEVSALKTAAESAILEGKEIVSSATPKDTQYDIGFTESTLLDGSGKSQIQVTDNKDGTVELVATLGKSSGSAIKGAVITVSRKNDGVWNCKITKTPTAWKPNYAPANCPKS</sequence>
<name>FMK1_PSEAI</name>
<organism>
    <name type="scientific">Pseudomonas aeruginosa</name>
    <dbReference type="NCBI Taxonomy" id="287"/>
    <lineage>
        <taxon>Bacteria</taxon>
        <taxon>Pseudomonadati</taxon>
        <taxon>Pseudomonadota</taxon>
        <taxon>Gammaproteobacteria</taxon>
        <taxon>Pseudomonadales</taxon>
        <taxon>Pseudomonadaceae</taxon>
        <taxon>Pseudomonas</taxon>
    </lineage>
</organism>
<dbReference type="EMBL" id="M21652">
    <property type="protein sequence ID" value="AAC63060.1"/>
    <property type="molecule type" value="Genomic_DNA"/>
</dbReference>
<dbReference type="EMBL" id="S68100">
    <property type="protein sequence ID" value="AAC60460.1"/>
    <property type="molecule type" value="Genomic_DNA"/>
</dbReference>
<dbReference type="PIR" id="B31105">
    <property type="entry name" value="B31105"/>
</dbReference>
<dbReference type="RefSeq" id="WP_003122079.1">
    <property type="nucleotide sequence ID" value="NZ_WXZX01000030.1"/>
</dbReference>
<dbReference type="PDB" id="8V7P">
    <property type="method" value="X-ray"/>
    <property type="resolution" value="1.30 A"/>
    <property type="chains" value="A=35-154"/>
</dbReference>
<dbReference type="PDBsum" id="8V7P"/>
<dbReference type="SMR" id="P17836"/>
<dbReference type="eggNOG" id="COG4969">
    <property type="taxonomic scope" value="Bacteria"/>
</dbReference>
<dbReference type="GO" id="GO:0016020">
    <property type="term" value="C:membrane"/>
    <property type="evidence" value="ECO:0007669"/>
    <property type="project" value="UniProtKB-SubCell"/>
</dbReference>
<dbReference type="GO" id="GO:0009289">
    <property type="term" value="C:pilus"/>
    <property type="evidence" value="ECO:0007669"/>
    <property type="project" value="UniProtKB-SubCell"/>
</dbReference>
<dbReference type="GO" id="GO:0015627">
    <property type="term" value="C:type II protein secretion system complex"/>
    <property type="evidence" value="ECO:0007669"/>
    <property type="project" value="InterPro"/>
</dbReference>
<dbReference type="GO" id="GO:0007155">
    <property type="term" value="P:cell adhesion"/>
    <property type="evidence" value="ECO:0007669"/>
    <property type="project" value="InterPro"/>
</dbReference>
<dbReference type="GO" id="GO:0015628">
    <property type="term" value="P:protein secretion by the type II secretion system"/>
    <property type="evidence" value="ECO:0007669"/>
    <property type="project" value="InterPro"/>
</dbReference>
<dbReference type="Gene3D" id="3.30.700.10">
    <property type="entry name" value="Glycoprotein, Type 4 Pilin"/>
    <property type="match status" value="1"/>
</dbReference>
<dbReference type="InterPro" id="IPR000983">
    <property type="entry name" value="Bac_GSPG_pilin"/>
</dbReference>
<dbReference type="InterPro" id="IPR012902">
    <property type="entry name" value="N_methyl_site"/>
</dbReference>
<dbReference type="InterPro" id="IPR001082">
    <property type="entry name" value="Pilin"/>
</dbReference>
<dbReference type="InterPro" id="IPR045584">
    <property type="entry name" value="Pilin-like"/>
</dbReference>
<dbReference type="InterPro" id="IPR050470">
    <property type="entry name" value="T4P/T2SS_Core"/>
</dbReference>
<dbReference type="NCBIfam" id="TIGR02532">
    <property type="entry name" value="IV_pilin_GFxxxE"/>
    <property type="match status" value="1"/>
</dbReference>
<dbReference type="PANTHER" id="PTHR30093">
    <property type="entry name" value="GENERAL SECRETION PATHWAY PROTEIN G"/>
    <property type="match status" value="1"/>
</dbReference>
<dbReference type="PANTHER" id="PTHR30093:SF34">
    <property type="entry name" value="PREPILIN PEPTIDASE-DEPENDENT PROTEIN D"/>
    <property type="match status" value="1"/>
</dbReference>
<dbReference type="Pfam" id="PF07963">
    <property type="entry name" value="N_methyl"/>
    <property type="match status" value="1"/>
</dbReference>
<dbReference type="Pfam" id="PF00114">
    <property type="entry name" value="Pilin"/>
    <property type="match status" value="1"/>
</dbReference>
<dbReference type="PRINTS" id="PR00813">
    <property type="entry name" value="BCTERIALGSPG"/>
</dbReference>
<dbReference type="SUPFAM" id="SSF54523">
    <property type="entry name" value="Pili subunits"/>
    <property type="match status" value="1"/>
</dbReference>
<dbReference type="PROSITE" id="PS00409">
    <property type="entry name" value="PROKAR_NTER_METHYL"/>
    <property type="match status" value="1"/>
</dbReference>
<evidence type="ECO:0000250" key="1"/>
<evidence type="ECO:0000255" key="2"/>
<evidence type="ECO:0000255" key="3">
    <source>
        <dbReference type="PROSITE-ProRule" id="PRU01070"/>
    </source>
</evidence>
<evidence type="ECO:0000305" key="4"/>
<evidence type="ECO:0007829" key="5">
    <source>
        <dbReference type="PDB" id="8V7P"/>
    </source>
</evidence>
<comment type="subunit">
    <text>The pili are polar flexible filaments of about 5.4 nanometers diameter and 2.5 micrometers average length; they consist of only a single polypeptide chain arranged in a helical configuration of five subunits per turn in the assembled pilus.</text>
</comment>
<comment type="subcellular location">
    <subcellularLocation>
        <location>Fimbrium</location>
    </subcellularLocation>
    <subcellularLocation>
        <location evidence="2">Membrane</location>
        <topology evidence="2">Single-pass membrane protein</topology>
    </subcellularLocation>
</comment>
<comment type="similarity">
    <text evidence="4">Belongs to the N-Me-Phe pilin family.</text>
</comment>
<reference key="1">
    <citation type="journal article" date="1988" name="J. Bacteriol.">
        <title>Two unusual pilin sequences from different isolates of Pseudomonas aeruginosa.</title>
        <authorList>
            <person name="Pasloske B.L."/>
            <person name="Sastry P.A."/>
            <person name="Finlay B.B."/>
            <person name="Paranchych W."/>
        </authorList>
    </citation>
    <scope>NUCLEOTIDE SEQUENCE [GENOMIC DNA]</scope>
    <source>
        <strain>P1</strain>
    </source>
</reference>
<reference key="2">
    <citation type="journal article" date="1994" name="Infect. Immun.">
        <title>Differentiation of Pseudomonas aeruginosa pili based on sequence and B-cell epitope analyses.</title>
        <authorList>
            <person name="Castric P.A."/>
            <person name="Deal C.D."/>
        </authorList>
    </citation>
    <scope>NUCLEOTIDE SEQUENCE [GENOMIC DNA]</scope>
    <source>
        <strain>9D2</strain>
    </source>
</reference>
<protein>
    <recommendedName>
        <fullName>Fimbrial protein</fullName>
    </recommendedName>
    <alternativeName>
        <fullName>Pilin</fullName>
    </alternativeName>
</protein>